<sequence>MNLKELLNNIEAKIYGKVSPIEVRNLTKDSRNVGFGDIFIANKGKQFDGNDFSPLAIENGAIAIASSIYNPFLSVVQIVSSNLPQLEAELSAKYYNYPSKKLCIVGVTGTNGKTTVSHLIKTLFDGCNKPSGLIGTIEHVLGNNRIQDGYTTPESCLLQKYLAEMVKNRLTSAVMEVSSVGLVLERLAEVDFDVGVLTNITLDHLDFHGSFEEYINAKLKLFSKLPATGLAVVNGDLSYASRFLEMTQAQPITYGIECPADYRAMHLRSSPFGTDFDLVYRGESLPCRLPLIGKHNVYNILAAIAVAHQHCNGDLQQLISLAANVESPRGRLEPVFSGPCPIYIDYAHTPDALENVCKTLHALLPEQGKLIVVFGCGGDRDQSKRQIMAEVVERYGFAVVTSDNPRGEDPEEIIKAICSGFVKRNFSIEIDRKQAITYALSIASDRDIVLVAGKGHETYQIFKHQTIAFDDKEIVREVLSSHV</sequence>
<proteinExistence type="inferred from homology"/>
<accession>Q823N2</accession>
<protein>
    <recommendedName>
        <fullName evidence="1">UDP-N-acetylmuramoyl-L-alanyl-D-glutamate--2,6-diaminopimelate ligase</fullName>
        <ecNumber evidence="1">6.3.2.13</ecNumber>
    </recommendedName>
    <alternativeName>
        <fullName evidence="1">Meso-A2pm-adding enzyme</fullName>
    </alternativeName>
    <alternativeName>
        <fullName evidence="1">Meso-diaminopimelate-adding enzyme</fullName>
    </alternativeName>
    <alternativeName>
        <fullName evidence="1">UDP-MurNAc-L-Ala-D-Glu:meso-diaminopimelate ligase</fullName>
    </alternativeName>
    <alternativeName>
        <fullName evidence="1">UDP-MurNAc-tripeptide synthetase</fullName>
    </alternativeName>
    <alternativeName>
        <fullName evidence="1">UDP-N-acetylmuramyl-tripeptide synthetase</fullName>
    </alternativeName>
</protein>
<keyword id="KW-0067">ATP-binding</keyword>
<keyword id="KW-0131">Cell cycle</keyword>
<keyword id="KW-0132">Cell division</keyword>
<keyword id="KW-0133">Cell shape</keyword>
<keyword id="KW-0961">Cell wall biogenesis/degradation</keyword>
<keyword id="KW-0963">Cytoplasm</keyword>
<keyword id="KW-0436">Ligase</keyword>
<keyword id="KW-0460">Magnesium</keyword>
<keyword id="KW-0547">Nucleotide-binding</keyword>
<keyword id="KW-0573">Peptidoglycan synthesis</keyword>
<comment type="function">
    <text evidence="1">Catalyzes the addition of meso-diaminopimelic acid to the nucleotide precursor UDP-N-acetylmuramoyl-L-alanyl-D-glutamate (UMAG) in the biosynthesis of bacterial cell-wall peptidoglycan.</text>
</comment>
<comment type="catalytic activity">
    <reaction evidence="1">
        <text>UDP-N-acetyl-alpha-D-muramoyl-L-alanyl-D-glutamate + meso-2,6-diaminopimelate + ATP = UDP-N-acetyl-alpha-D-muramoyl-L-alanyl-gamma-D-glutamyl-meso-2,6-diaminopimelate + ADP + phosphate + H(+)</text>
        <dbReference type="Rhea" id="RHEA:23676"/>
        <dbReference type="ChEBI" id="CHEBI:15378"/>
        <dbReference type="ChEBI" id="CHEBI:30616"/>
        <dbReference type="ChEBI" id="CHEBI:43474"/>
        <dbReference type="ChEBI" id="CHEBI:57791"/>
        <dbReference type="ChEBI" id="CHEBI:83900"/>
        <dbReference type="ChEBI" id="CHEBI:83905"/>
        <dbReference type="ChEBI" id="CHEBI:456216"/>
        <dbReference type="EC" id="6.3.2.13"/>
    </reaction>
</comment>
<comment type="cofactor">
    <cofactor evidence="1">
        <name>Mg(2+)</name>
        <dbReference type="ChEBI" id="CHEBI:18420"/>
    </cofactor>
</comment>
<comment type="pathway">
    <text evidence="1">Cell wall biogenesis; peptidoglycan biosynthesis.</text>
</comment>
<comment type="subcellular location">
    <subcellularLocation>
        <location evidence="1">Cytoplasm</location>
    </subcellularLocation>
</comment>
<comment type="PTM">
    <text evidence="1">Carboxylation is probably crucial for Mg(2+) binding and, consequently, for the gamma-phosphate positioning of ATP.</text>
</comment>
<comment type="similarity">
    <text evidence="1">Belongs to the MurCDEF family. MurE subfamily.</text>
</comment>
<evidence type="ECO:0000255" key="1">
    <source>
        <dbReference type="HAMAP-Rule" id="MF_00208"/>
    </source>
</evidence>
<name>MURE_CHLCV</name>
<feature type="chain" id="PRO_0000101879" description="UDP-N-acetylmuramoyl-L-alanyl-D-glutamate--2,6-diaminopimelate ligase">
    <location>
        <begin position="1"/>
        <end position="483"/>
    </location>
</feature>
<feature type="short sequence motif" description="Meso-diaminopimelate recognition motif">
    <location>
        <begin position="403"/>
        <end position="406"/>
    </location>
</feature>
<feature type="binding site" evidence="1">
    <location>
        <position position="30"/>
    </location>
    <ligand>
        <name>UDP-N-acetyl-alpha-D-muramoyl-L-alanyl-D-glutamate</name>
        <dbReference type="ChEBI" id="CHEBI:83900"/>
    </ligand>
</feature>
<feature type="binding site" evidence="1">
    <location>
        <begin position="109"/>
        <end position="115"/>
    </location>
    <ligand>
        <name>ATP</name>
        <dbReference type="ChEBI" id="CHEBI:30616"/>
    </ligand>
</feature>
<feature type="binding site" evidence="1">
    <location>
        <begin position="151"/>
        <end position="152"/>
    </location>
    <ligand>
        <name>UDP-N-acetyl-alpha-D-muramoyl-L-alanyl-D-glutamate</name>
        <dbReference type="ChEBI" id="CHEBI:83900"/>
    </ligand>
</feature>
<feature type="binding site" evidence="1">
    <location>
        <position position="178"/>
    </location>
    <ligand>
        <name>UDP-N-acetyl-alpha-D-muramoyl-L-alanyl-D-glutamate</name>
        <dbReference type="ChEBI" id="CHEBI:83900"/>
    </ligand>
</feature>
<feature type="binding site" evidence="1">
    <location>
        <position position="186"/>
    </location>
    <ligand>
        <name>UDP-N-acetyl-alpha-D-muramoyl-L-alanyl-D-glutamate</name>
        <dbReference type="ChEBI" id="CHEBI:83900"/>
    </ligand>
</feature>
<feature type="binding site" evidence="1">
    <location>
        <position position="380"/>
    </location>
    <ligand>
        <name>meso-2,6-diaminopimelate</name>
        <dbReference type="ChEBI" id="CHEBI:57791"/>
    </ligand>
</feature>
<feature type="binding site" evidence="1">
    <location>
        <begin position="403"/>
        <end position="406"/>
    </location>
    <ligand>
        <name>meso-2,6-diaminopimelate</name>
        <dbReference type="ChEBI" id="CHEBI:57791"/>
    </ligand>
</feature>
<feature type="binding site" evidence="1">
    <location>
        <position position="453"/>
    </location>
    <ligand>
        <name>meso-2,6-diaminopimelate</name>
        <dbReference type="ChEBI" id="CHEBI:57791"/>
    </ligand>
</feature>
<feature type="binding site" evidence="1">
    <location>
        <position position="457"/>
    </location>
    <ligand>
        <name>meso-2,6-diaminopimelate</name>
        <dbReference type="ChEBI" id="CHEBI:57791"/>
    </ligand>
</feature>
<feature type="modified residue" description="N6-carboxylysine" evidence="1">
    <location>
        <position position="218"/>
    </location>
</feature>
<organism>
    <name type="scientific">Chlamydia caviae (strain ATCC VR-813 / DSM 19441 / 03DC25 / GPIC)</name>
    <name type="common">Chlamydophila caviae</name>
    <dbReference type="NCBI Taxonomy" id="227941"/>
    <lineage>
        <taxon>Bacteria</taxon>
        <taxon>Pseudomonadati</taxon>
        <taxon>Chlamydiota</taxon>
        <taxon>Chlamydiia</taxon>
        <taxon>Chlamydiales</taxon>
        <taxon>Chlamydiaceae</taxon>
        <taxon>Chlamydia/Chlamydophila group</taxon>
        <taxon>Chlamydia</taxon>
    </lineage>
</organism>
<gene>
    <name evidence="1" type="primary">murE</name>
    <name type="ordered locus">CCA_00376</name>
</gene>
<dbReference type="EC" id="6.3.2.13" evidence="1"/>
<dbReference type="EMBL" id="AE015925">
    <property type="protein sequence ID" value="AAP05123.1"/>
    <property type="molecule type" value="Genomic_DNA"/>
</dbReference>
<dbReference type="RefSeq" id="WP_011006340.1">
    <property type="nucleotide sequence ID" value="NC_003361.3"/>
</dbReference>
<dbReference type="SMR" id="Q823N2"/>
<dbReference type="STRING" id="227941.CCA_00376"/>
<dbReference type="KEGG" id="cca:CCA_00376"/>
<dbReference type="eggNOG" id="COG0769">
    <property type="taxonomic scope" value="Bacteria"/>
</dbReference>
<dbReference type="HOGENOM" id="CLU_022291_4_1_0"/>
<dbReference type="OrthoDB" id="9800958at2"/>
<dbReference type="UniPathway" id="UPA00219"/>
<dbReference type="Proteomes" id="UP000002193">
    <property type="component" value="Chromosome"/>
</dbReference>
<dbReference type="GO" id="GO:0005737">
    <property type="term" value="C:cytoplasm"/>
    <property type="evidence" value="ECO:0007669"/>
    <property type="project" value="UniProtKB-SubCell"/>
</dbReference>
<dbReference type="GO" id="GO:0005524">
    <property type="term" value="F:ATP binding"/>
    <property type="evidence" value="ECO:0007669"/>
    <property type="project" value="UniProtKB-UniRule"/>
</dbReference>
<dbReference type="GO" id="GO:0000287">
    <property type="term" value="F:magnesium ion binding"/>
    <property type="evidence" value="ECO:0007669"/>
    <property type="project" value="UniProtKB-UniRule"/>
</dbReference>
<dbReference type="GO" id="GO:0008765">
    <property type="term" value="F:UDP-N-acetylmuramoylalanyl-D-glutamate-2,6-diaminopimelate ligase activity"/>
    <property type="evidence" value="ECO:0007669"/>
    <property type="project" value="UniProtKB-UniRule"/>
</dbReference>
<dbReference type="GO" id="GO:0051301">
    <property type="term" value="P:cell division"/>
    <property type="evidence" value="ECO:0007669"/>
    <property type="project" value="UniProtKB-KW"/>
</dbReference>
<dbReference type="GO" id="GO:0071555">
    <property type="term" value="P:cell wall organization"/>
    <property type="evidence" value="ECO:0007669"/>
    <property type="project" value="UniProtKB-KW"/>
</dbReference>
<dbReference type="GO" id="GO:0009252">
    <property type="term" value="P:peptidoglycan biosynthetic process"/>
    <property type="evidence" value="ECO:0007669"/>
    <property type="project" value="UniProtKB-UniRule"/>
</dbReference>
<dbReference type="GO" id="GO:0008360">
    <property type="term" value="P:regulation of cell shape"/>
    <property type="evidence" value="ECO:0007669"/>
    <property type="project" value="UniProtKB-KW"/>
</dbReference>
<dbReference type="Gene3D" id="3.90.190.20">
    <property type="entry name" value="Mur ligase, C-terminal domain"/>
    <property type="match status" value="1"/>
</dbReference>
<dbReference type="Gene3D" id="3.40.1190.10">
    <property type="entry name" value="Mur-like, catalytic domain"/>
    <property type="match status" value="1"/>
</dbReference>
<dbReference type="Gene3D" id="3.40.1390.10">
    <property type="entry name" value="MurE/MurF, N-terminal domain"/>
    <property type="match status" value="1"/>
</dbReference>
<dbReference type="HAMAP" id="MF_00208">
    <property type="entry name" value="MurE"/>
    <property type="match status" value="1"/>
</dbReference>
<dbReference type="InterPro" id="IPR036565">
    <property type="entry name" value="Mur-like_cat_sf"/>
</dbReference>
<dbReference type="InterPro" id="IPR004101">
    <property type="entry name" value="Mur_ligase_C"/>
</dbReference>
<dbReference type="InterPro" id="IPR036615">
    <property type="entry name" value="Mur_ligase_C_dom_sf"/>
</dbReference>
<dbReference type="InterPro" id="IPR013221">
    <property type="entry name" value="Mur_ligase_cen"/>
</dbReference>
<dbReference type="InterPro" id="IPR000713">
    <property type="entry name" value="Mur_ligase_N"/>
</dbReference>
<dbReference type="InterPro" id="IPR035911">
    <property type="entry name" value="MurE/MurF_N"/>
</dbReference>
<dbReference type="InterPro" id="IPR005761">
    <property type="entry name" value="UDP-N-AcMur-Glu-dNH2Pim_ligase"/>
</dbReference>
<dbReference type="NCBIfam" id="TIGR01085">
    <property type="entry name" value="murE"/>
    <property type="match status" value="1"/>
</dbReference>
<dbReference type="NCBIfam" id="NF001126">
    <property type="entry name" value="PRK00139.1-4"/>
    <property type="match status" value="1"/>
</dbReference>
<dbReference type="PANTHER" id="PTHR23135">
    <property type="entry name" value="MUR LIGASE FAMILY MEMBER"/>
    <property type="match status" value="1"/>
</dbReference>
<dbReference type="PANTHER" id="PTHR23135:SF4">
    <property type="entry name" value="UDP-N-ACETYLMURAMOYL-L-ALANYL-D-GLUTAMATE--2,6-DIAMINOPIMELATE LIGASE MURE HOMOLOG, CHLOROPLASTIC"/>
    <property type="match status" value="1"/>
</dbReference>
<dbReference type="Pfam" id="PF01225">
    <property type="entry name" value="Mur_ligase"/>
    <property type="match status" value="1"/>
</dbReference>
<dbReference type="Pfam" id="PF02875">
    <property type="entry name" value="Mur_ligase_C"/>
    <property type="match status" value="1"/>
</dbReference>
<dbReference type="Pfam" id="PF08245">
    <property type="entry name" value="Mur_ligase_M"/>
    <property type="match status" value="1"/>
</dbReference>
<dbReference type="SUPFAM" id="SSF53623">
    <property type="entry name" value="MurD-like peptide ligases, catalytic domain"/>
    <property type="match status" value="1"/>
</dbReference>
<dbReference type="SUPFAM" id="SSF53244">
    <property type="entry name" value="MurD-like peptide ligases, peptide-binding domain"/>
    <property type="match status" value="1"/>
</dbReference>
<dbReference type="SUPFAM" id="SSF63418">
    <property type="entry name" value="MurE/MurF N-terminal domain"/>
    <property type="match status" value="1"/>
</dbReference>
<reference key="1">
    <citation type="journal article" date="2003" name="Nucleic Acids Res.">
        <title>Genome sequence of Chlamydophila caviae (Chlamydia psittaci GPIC): examining the role of niche-specific genes in the evolution of the Chlamydiaceae.</title>
        <authorList>
            <person name="Read T.D."/>
            <person name="Myers G.S.A."/>
            <person name="Brunham R.C."/>
            <person name="Nelson W.C."/>
            <person name="Paulsen I.T."/>
            <person name="Heidelberg J.F."/>
            <person name="Holtzapple E.K."/>
            <person name="Khouri H.M."/>
            <person name="Federova N.B."/>
            <person name="Carty H.A."/>
            <person name="Umayam L.A."/>
            <person name="Haft D.H."/>
            <person name="Peterson J.D."/>
            <person name="Beanan M.J."/>
            <person name="White O."/>
            <person name="Salzberg S.L."/>
            <person name="Hsia R.-C."/>
            <person name="McClarty G."/>
            <person name="Rank R.G."/>
            <person name="Bavoil P.M."/>
            <person name="Fraser C.M."/>
        </authorList>
    </citation>
    <scope>NUCLEOTIDE SEQUENCE [LARGE SCALE GENOMIC DNA]</scope>
    <source>
        <strain>ATCC VR-813 / DSM 19441 / 03DC25 / GPIC</strain>
    </source>
</reference>